<protein>
    <recommendedName>
        <fullName evidence="1">Phosphate import ATP-binding protein PstB 2</fullName>
        <ecNumber evidence="1">7.3.2.1</ecNumber>
    </recommendedName>
    <alternativeName>
        <fullName evidence="1">ABC phosphate transporter 2</fullName>
    </alternativeName>
    <alternativeName>
        <fullName evidence="1">Phosphate-transporting ATPase 2</fullName>
    </alternativeName>
</protein>
<name>PSTB2_STRP1</name>
<gene>
    <name evidence="1" type="primary">pstB2</name>
    <name type="ordered locus">SPy_1242</name>
    <name type="ordered locus">M5005_Spy0952</name>
</gene>
<proteinExistence type="inferred from homology"/>
<evidence type="ECO:0000255" key="1">
    <source>
        <dbReference type="HAMAP-Rule" id="MF_01702"/>
    </source>
</evidence>
<dbReference type="EC" id="7.3.2.1" evidence="1"/>
<dbReference type="EMBL" id="AE004092">
    <property type="protein sequence ID" value="AAK34097.1"/>
    <property type="molecule type" value="Genomic_DNA"/>
</dbReference>
<dbReference type="EMBL" id="CP000017">
    <property type="protein sequence ID" value="AAZ51570.1"/>
    <property type="molecule type" value="Genomic_DNA"/>
</dbReference>
<dbReference type="RefSeq" id="NP_269376.1">
    <property type="nucleotide sequence ID" value="NC_002737.2"/>
</dbReference>
<dbReference type="SMR" id="P63378"/>
<dbReference type="PaxDb" id="1314-HKU360_00997"/>
<dbReference type="KEGG" id="spy:SPy_1242"/>
<dbReference type="KEGG" id="spz:M5005_Spy0952"/>
<dbReference type="PATRIC" id="fig|160490.10.peg.1085"/>
<dbReference type="HOGENOM" id="CLU_000604_1_22_9"/>
<dbReference type="OMA" id="ALVTHNM"/>
<dbReference type="Proteomes" id="UP000000750">
    <property type="component" value="Chromosome"/>
</dbReference>
<dbReference type="GO" id="GO:0005886">
    <property type="term" value="C:plasma membrane"/>
    <property type="evidence" value="ECO:0007669"/>
    <property type="project" value="UniProtKB-SubCell"/>
</dbReference>
<dbReference type="GO" id="GO:0005524">
    <property type="term" value="F:ATP binding"/>
    <property type="evidence" value="ECO:0007669"/>
    <property type="project" value="UniProtKB-KW"/>
</dbReference>
<dbReference type="GO" id="GO:0016887">
    <property type="term" value="F:ATP hydrolysis activity"/>
    <property type="evidence" value="ECO:0007669"/>
    <property type="project" value="InterPro"/>
</dbReference>
<dbReference type="GO" id="GO:0015415">
    <property type="term" value="F:ATPase-coupled phosphate ion transmembrane transporter activity"/>
    <property type="evidence" value="ECO:0007669"/>
    <property type="project" value="UniProtKB-EC"/>
</dbReference>
<dbReference type="GO" id="GO:0035435">
    <property type="term" value="P:phosphate ion transmembrane transport"/>
    <property type="evidence" value="ECO:0007669"/>
    <property type="project" value="InterPro"/>
</dbReference>
<dbReference type="CDD" id="cd03260">
    <property type="entry name" value="ABC_PstB_phosphate_transporter"/>
    <property type="match status" value="1"/>
</dbReference>
<dbReference type="Gene3D" id="3.40.50.300">
    <property type="entry name" value="P-loop containing nucleotide triphosphate hydrolases"/>
    <property type="match status" value="1"/>
</dbReference>
<dbReference type="InterPro" id="IPR003593">
    <property type="entry name" value="AAA+_ATPase"/>
</dbReference>
<dbReference type="InterPro" id="IPR003439">
    <property type="entry name" value="ABC_transporter-like_ATP-bd"/>
</dbReference>
<dbReference type="InterPro" id="IPR017871">
    <property type="entry name" value="ABC_transporter-like_CS"/>
</dbReference>
<dbReference type="InterPro" id="IPR027417">
    <property type="entry name" value="P-loop_NTPase"/>
</dbReference>
<dbReference type="InterPro" id="IPR005670">
    <property type="entry name" value="PstB-like"/>
</dbReference>
<dbReference type="NCBIfam" id="TIGR00972">
    <property type="entry name" value="3a0107s01c2"/>
    <property type="match status" value="1"/>
</dbReference>
<dbReference type="PANTHER" id="PTHR43423">
    <property type="entry name" value="ABC TRANSPORTER I FAMILY MEMBER 17"/>
    <property type="match status" value="1"/>
</dbReference>
<dbReference type="PANTHER" id="PTHR43423:SF10">
    <property type="entry name" value="PHOSPHATE IMPORT ATP-BINDING PROTEIN PSTB 2"/>
    <property type="match status" value="1"/>
</dbReference>
<dbReference type="Pfam" id="PF00005">
    <property type="entry name" value="ABC_tran"/>
    <property type="match status" value="1"/>
</dbReference>
<dbReference type="SMART" id="SM00382">
    <property type="entry name" value="AAA"/>
    <property type="match status" value="1"/>
</dbReference>
<dbReference type="SUPFAM" id="SSF52540">
    <property type="entry name" value="P-loop containing nucleoside triphosphate hydrolases"/>
    <property type="match status" value="1"/>
</dbReference>
<dbReference type="PROSITE" id="PS00211">
    <property type="entry name" value="ABC_TRANSPORTER_1"/>
    <property type="match status" value="1"/>
</dbReference>
<dbReference type="PROSITE" id="PS50893">
    <property type="entry name" value="ABC_TRANSPORTER_2"/>
    <property type="match status" value="1"/>
</dbReference>
<dbReference type="PROSITE" id="PS51238">
    <property type="entry name" value="PSTB"/>
    <property type="match status" value="1"/>
</dbReference>
<reference key="1">
    <citation type="journal article" date="2001" name="Proc. Natl. Acad. Sci. U.S.A.">
        <title>Complete genome sequence of an M1 strain of Streptococcus pyogenes.</title>
        <authorList>
            <person name="Ferretti J.J."/>
            <person name="McShan W.M."/>
            <person name="Ajdic D.J."/>
            <person name="Savic D.J."/>
            <person name="Savic G."/>
            <person name="Lyon K."/>
            <person name="Primeaux C."/>
            <person name="Sezate S."/>
            <person name="Suvorov A.N."/>
            <person name="Kenton S."/>
            <person name="Lai H.S."/>
            <person name="Lin S.P."/>
            <person name="Qian Y."/>
            <person name="Jia H.G."/>
            <person name="Najar F.Z."/>
            <person name="Ren Q."/>
            <person name="Zhu H."/>
            <person name="Song L."/>
            <person name="White J."/>
            <person name="Yuan X."/>
            <person name="Clifton S.W."/>
            <person name="Roe B.A."/>
            <person name="McLaughlin R.E."/>
        </authorList>
    </citation>
    <scope>NUCLEOTIDE SEQUENCE [LARGE SCALE GENOMIC DNA]</scope>
    <source>
        <strain>ATCC 700294 / SF370 / Serotype M1</strain>
    </source>
</reference>
<reference key="2">
    <citation type="journal article" date="2005" name="J. Infect. Dis.">
        <title>Evolutionary origin and emergence of a highly successful clone of serotype M1 group A Streptococcus involved multiple horizontal gene transfer events.</title>
        <authorList>
            <person name="Sumby P."/>
            <person name="Porcella S.F."/>
            <person name="Madrigal A.G."/>
            <person name="Barbian K.D."/>
            <person name="Virtaneva K."/>
            <person name="Ricklefs S.M."/>
            <person name="Sturdevant D.E."/>
            <person name="Graham M.R."/>
            <person name="Vuopio-Varkila J."/>
            <person name="Hoe N.P."/>
            <person name="Musser J.M."/>
        </authorList>
    </citation>
    <scope>NUCLEOTIDE SEQUENCE [LARGE SCALE GENOMIC DNA]</scope>
    <source>
        <strain>ATCC BAA-947 / MGAS5005 / Serotype M1</strain>
    </source>
</reference>
<keyword id="KW-0067">ATP-binding</keyword>
<keyword id="KW-1003">Cell membrane</keyword>
<keyword id="KW-0472">Membrane</keyword>
<keyword id="KW-0547">Nucleotide-binding</keyword>
<keyword id="KW-0592">Phosphate transport</keyword>
<keyword id="KW-1185">Reference proteome</keyword>
<keyword id="KW-1278">Translocase</keyword>
<keyword id="KW-0813">Transport</keyword>
<comment type="function">
    <text evidence="1">Part of the ABC transporter complex PstSACB involved in phosphate import. Responsible for energy coupling to the transport system.</text>
</comment>
<comment type="catalytic activity">
    <reaction evidence="1">
        <text>phosphate(out) + ATP + H2O = ADP + 2 phosphate(in) + H(+)</text>
        <dbReference type="Rhea" id="RHEA:24440"/>
        <dbReference type="ChEBI" id="CHEBI:15377"/>
        <dbReference type="ChEBI" id="CHEBI:15378"/>
        <dbReference type="ChEBI" id="CHEBI:30616"/>
        <dbReference type="ChEBI" id="CHEBI:43474"/>
        <dbReference type="ChEBI" id="CHEBI:456216"/>
        <dbReference type="EC" id="7.3.2.1"/>
    </reaction>
</comment>
<comment type="subunit">
    <text evidence="1">The complex is composed of two ATP-binding proteins (PstB), two transmembrane proteins (PstC and PstA) and a solute-binding protein (PstS).</text>
</comment>
<comment type="subcellular location">
    <subcellularLocation>
        <location evidence="1">Cell membrane</location>
        <topology evidence="1">Peripheral membrane protein</topology>
    </subcellularLocation>
</comment>
<comment type="similarity">
    <text evidence="1">Belongs to the ABC transporter superfamily. Phosphate importer (TC 3.A.1.7) family.</text>
</comment>
<sequence length="267" mass="30482">MTEYNWNERHIITFPEETLALATKDLHVYYGAKEAIKGIDMQFEKHKITALIGPSGCGKSTYLRSLNRMNDTIDIARVTGEILYQGIDVNRKDMNVYEIRKHLGMVFQRPNPFAKSIYKNITFAHERAGVKDKKVLDEIVETSLKQAALWDQVKDDLHKSAFTLSGGQQQRLCIARAISVKPDILLMDEPASALDPIATMQLEETMFELKKNYTIIIVTHNMQQAARASDYTAFFYLGNLIEYDKTRNIFQNAQCQSTNDYVSGHFG</sequence>
<accession>P63378</accession>
<accession>Q48YK2</accession>
<accession>Q99ZG4</accession>
<organism>
    <name type="scientific">Streptococcus pyogenes serotype M1</name>
    <dbReference type="NCBI Taxonomy" id="301447"/>
    <lineage>
        <taxon>Bacteria</taxon>
        <taxon>Bacillati</taxon>
        <taxon>Bacillota</taxon>
        <taxon>Bacilli</taxon>
        <taxon>Lactobacillales</taxon>
        <taxon>Streptococcaceae</taxon>
        <taxon>Streptococcus</taxon>
    </lineage>
</organism>
<feature type="chain" id="PRO_0000092904" description="Phosphate import ATP-binding protein PstB 2">
    <location>
        <begin position="1"/>
        <end position="267"/>
    </location>
</feature>
<feature type="domain" description="ABC transporter" evidence="1">
    <location>
        <begin position="21"/>
        <end position="262"/>
    </location>
</feature>
<feature type="binding site" evidence="1">
    <location>
        <begin position="53"/>
        <end position="60"/>
    </location>
    <ligand>
        <name>ATP</name>
        <dbReference type="ChEBI" id="CHEBI:30616"/>
    </ligand>
</feature>